<dbReference type="EC" id="2.7.8.-" evidence="1"/>
<dbReference type="EMBL" id="CP000720">
    <property type="protein sequence ID" value="ABS49159.1"/>
    <property type="molecule type" value="Genomic_DNA"/>
</dbReference>
<dbReference type="RefSeq" id="WP_002210648.1">
    <property type="nucleotide sequence ID" value="NC_009708.1"/>
</dbReference>
<dbReference type="SMR" id="A7FI50"/>
<dbReference type="GeneID" id="57976479"/>
<dbReference type="KEGG" id="ypi:YpsIP31758_1953"/>
<dbReference type="HOGENOM" id="CLU_038053_1_0_6"/>
<dbReference type="Proteomes" id="UP000002412">
    <property type="component" value="Chromosome"/>
</dbReference>
<dbReference type="GO" id="GO:0005886">
    <property type="term" value="C:plasma membrane"/>
    <property type="evidence" value="ECO:0007669"/>
    <property type="project" value="UniProtKB-SubCell"/>
</dbReference>
<dbReference type="GO" id="GO:0008808">
    <property type="term" value="F:cardiolipin synthase activity"/>
    <property type="evidence" value="ECO:0007669"/>
    <property type="project" value="InterPro"/>
</dbReference>
<dbReference type="GO" id="GO:0032049">
    <property type="term" value="P:cardiolipin biosynthetic process"/>
    <property type="evidence" value="ECO:0007669"/>
    <property type="project" value="InterPro"/>
</dbReference>
<dbReference type="CDD" id="cd09152">
    <property type="entry name" value="PLDc_EcCLS_like_1"/>
    <property type="match status" value="1"/>
</dbReference>
<dbReference type="CDD" id="cd09158">
    <property type="entry name" value="PLDc_EcCLS_like_2"/>
    <property type="match status" value="1"/>
</dbReference>
<dbReference type="FunFam" id="3.30.870.10:FF:000002">
    <property type="entry name" value="Cardiolipin synthase A"/>
    <property type="match status" value="1"/>
</dbReference>
<dbReference type="FunFam" id="3.30.870.10:FF:000003">
    <property type="entry name" value="Cardiolipin synthase A"/>
    <property type="match status" value="1"/>
</dbReference>
<dbReference type="Gene3D" id="3.30.870.10">
    <property type="entry name" value="Endonuclease Chain A"/>
    <property type="match status" value="2"/>
</dbReference>
<dbReference type="HAMAP" id="MF_00190">
    <property type="entry name" value="Cardiolipin_synth_ClsA"/>
    <property type="match status" value="1"/>
</dbReference>
<dbReference type="InterPro" id="IPR022924">
    <property type="entry name" value="Cardiolipin_synthase"/>
</dbReference>
<dbReference type="InterPro" id="IPR030840">
    <property type="entry name" value="CL_synthase_A"/>
</dbReference>
<dbReference type="InterPro" id="IPR027379">
    <property type="entry name" value="CLS_N"/>
</dbReference>
<dbReference type="InterPro" id="IPR025202">
    <property type="entry name" value="PLD-like_dom"/>
</dbReference>
<dbReference type="InterPro" id="IPR001736">
    <property type="entry name" value="PLipase_D/transphosphatidylase"/>
</dbReference>
<dbReference type="NCBIfam" id="TIGR04265">
    <property type="entry name" value="bac_cardiolipin"/>
    <property type="match status" value="1"/>
</dbReference>
<dbReference type="PANTHER" id="PTHR21248">
    <property type="entry name" value="CARDIOLIPIN SYNTHASE"/>
    <property type="match status" value="1"/>
</dbReference>
<dbReference type="PANTHER" id="PTHR21248:SF22">
    <property type="entry name" value="PHOSPHOLIPASE D"/>
    <property type="match status" value="1"/>
</dbReference>
<dbReference type="Pfam" id="PF13091">
    <property type="entry name" value="PLDc_2"/>
    <property type="match status" value="2"/>
</dbReference>
<dbReference type="Pfam" id="PF13396">
    <property type="entry name" value="PLDc_N"/>
    <property type="match status" value="1"/>
</dbReference>
<dbReference type="SMART" id="SM00155">
    <property type="entry name" value="PLDc"/>
    <property type="match status" value="2"/>
</dbReference>
<dbReference type="SUPFAM" id="SSF56024">
    <property type="entry name" value="Phospholipase D/nuclease"/>
    <property type="match status" value="2"/>
</dbReference>
<dbReference type="PROSITE" id="PS50035">
    <property type="entry name" value="PLD"/>
    <property type="match status" value="2"/>
</dbReference>
<feature type="chain" id="PRO_1000058496" description="Cardiolipin synthase A">
    <location>
        <begin position="1"/>
        <end position="486"/>
    </location>
</feature>
<feature type="transmembrane region" description="Helical" evidence="1">
    <location>
        <begin position="3"/>
        <end position="23"/>
    </location>
</feature>
<feature type="transmembrane region" description="Helical" evidence="1">
    <location>
        <begin position="38"/>
        <end position="58"/>
    </location>
</feature>
<feature type="domain" description="PLD phosphodiesterase 1" evidence="1">
    <location>
        <begin position="219"/>
        <end position="246"/>
    </location>
</feature>
<feature type="domain" description="PLD phosphodiesterase 2" evidence="1">
    <location>
        <begin position="399"/>
        <end position="426"/>
    </location>
</feature>
<feature type="active site" evidence="1">
    <location>
        <position position="224"/>
    </location>
</feature>
<feature type="active site" evidence="1">
    <location>
        <position position="226"/>
    </location>
</feature>
<feature type="active site" evidence="1">
    <location>
        <position position="231"/>
    </location>
</feature>
<feature type="active site" evidence="1">
    <location>
        <position position="404"/>
    </location>
</feature>
<feature type="active site" evidence="1">
    <location>
        <position position="406"/>
    </location>
</feature>
<feature type="active site" evidence="1">
    <location>
        <position position="411"/>
    </location>
</feature>
<protein>
    <recommendedName>
        <fullName evidence="1">Cardiolipin synthase A</fullName>
        <shortName evidence="1">CL synthase</shortName>
        <ecNumber evidence="1">2.7.8.-</ecNumber>
    </recommendedName>
</protein>
<name>CLSA_YERP3</name>
<accession>A7FI50</accession>
<proteinExistence type="inferred from homology"/>
<comment type="function">
    <text evidence="1">Catalyzes the reversible phosphatidyl group transfer from one phosphatidylglycerol molecule to another to form cardiolipin (CL) (diphosphatidylglycerol) and glycerol.</text>
</comment>
<comment type="catalytic activity">
    <reaction evidence="1">
        <text>2 a 1,2-diacyl-sn-glycero-3-phospho-(1'-sn-glycerol) = a cardiolipin + glycerol</text>
        <dbReference type="Rhea" id="RHEA:31451"/>
        <dbReference type="ChEBI" id="CHEBI:17754"/>
        <dbReference type="ChEBI" id="CHEBI:62237"/>
        <dbReference type="ChEBI" id="CHEBI:64716"/>
    </reaction>
</comment>
<comment type="subcellular location">
    <subcellularLocation>
        <location evidence="1">Cell inner membrane</location>
        <topology evidence="1">Multi-pass membrane protein</topology>
    </subcellularLocation>
</comment>
<comment type="similarity">
    <text evidence="1">Belongs to the phospholipase D family. Cardiolipin synthase subfamily. ClsA sub-subfamily.</text>
</comment>
<organism>
    <name type="scientific">Yersinia pseudotuberculosis serotype O:1b (strain IP 31758)</name>
    <dbReference type="NCBI Taxonomy" id="349747"/>
    <lineage>
        <taxon>Bacteria</taxon>
        <taxon>Pseudomonadati</taxon>
        <taxon>Pseudomonadota</taxon>
        <taxon>Gammaproteobacteria</taxon>
        <taxon>Enterobacterales</taxon>
        <taxon>Yersiniaceae</taxon>
        <taxon>Yersinia</taxon>
    </lineage>
</organism>
<reference key="1">
    <citation type="journal article" date="2007" name="PLoS Genet.">
        <title>The complete genome sequence of Yersinia pseudotuberculosis IP31758, the causative agent of Far East scarlet-like fever.</title>
        <authorList>
            <person name="Eppinger M."/>
            <person name="Rosovitz M.J."/>
            <person name="Fricke W.F."/>
            <person name="Rasko D.A."/>
            <person name="Kokorina G."/>
            <person name="Fayolle C."/>
            <person name="Lindler L.E."/>
            <person name="Carniel E."/>
            <person name="Ravel J."/>
        </authorList>
    </citation>
    <scope>NUCLEOTIDE SEQUENCE [LARGE SCALE GENOMIC DNA]</scope>
    <source>
        <strain>IP 31758</strain>
    </source>
</reference>
<gene>
    <name evidence="1" type="primary">clsA</name>
    <name type="synonym">cls</name>
    <name type="ordered locus">YpsIP31758_1953</name>
</gene>
<keyword id="KW-0997">Cell inner membrane</keyword>
<keyword id="KW-1003">Cell membrane</keyword>
<keyword id="KW-0444">Lipid biosynthesis</keyword>
<keyword id="KW-0443">Lipid metabolism</keyword>
<keyword id="KW-0472">Membrane</keyword>
<keyword id="KW-0594">Phospholipid biosynthesis</keyword>
<keyword id="KW-1208">Phospholipid metabolism</keyword>
<keyword id="KW-0677">Repeat</keyword>
<keyword id="KW-0808">Transferase</keyword>
<keyword id="KW-0812">Transmembrane</keyword>
<keyword id="KW-1133">Transmembrane helix</keyword>
<sequence length="486" mass="55127">MTTFYTVISWLSVFGYWLLIAGVTLRILMKRRAVPSAMAWLLIIYILPLVGIIAYLSFGELHLGKRRAERAKAMWPSTARWLSELKECQHIFANSNSEVASPLFQLCERRQGINGVKGNQLQLLTTTDDTLKALVRDIELARHNIEMVFYIWQPGGLVDQVAESLMAAARRGVHCRLLLDSAGSKQFFRSPYPAMMRNAGIEVVEALKVNVFRMFLRRMDLRQHRKIVLIDNYVAYTGSMNMVDPRFFKQDAGVGQWIDMMARMEGPVATTLGIVYACDWEIETGKRILPPPPDANIMPFEEETGHTIQVIASGPGFPEEMIHQALLTAVYAAREQLIMTTPYFVPSDDLLHAICTAAQRGVDVSIIVPRENDSMMVRWASRAFFTELLNAGVKIYQFEGGLLHSKSVLVDGQLSLVGTVNLDMRSLWLNFEITLVIDDDGFGADLAQVQDDYIARSALLDGERWNKRPLWHRVTERLFYFFSPLL</sequence>
<evidence type="ECO:0000255" key="1">
    <source>
        <dbReference type="HAMAP-Rule" id="MF_00190"/>
    </source>
</evidence>